<organism>
    <name type="scientific">Burkholderia cenocepacia (strain ATCC BAA-245 / DSM 16553 / LMG 16656 / NCTC 13227 / J2315 / CF5610)</name>
    <name type="common">Burkholderia cepacia (strain J2315)</name>
    <dbReference type="NCBI Taxonomy" id="216591"/>
    <lineage>
        <taxon>Bacteria</taxon>
        <taxon>Pseudomonadati</taxon>
        <taxon>Pseudomonadota</taxon>
        <taxon>Betaproteobacteria</taxon>
        <taxon>Burkholderiales</taxon>
        <taxon>Burkholderiaceae</taxon>
        <taxon>Burkholderia</taxon>
        <taxon>Burkholderia cepacia complex</taxon>
    </lineage>
</organism>
<comment type="function">
    <text evidence="1">Converts 2C-methyl-D-erythritol 2,4-cyclodiphosphate (ME-2,4cPP) into 1-hydroxy-2-methyl-2-(E)-butenyl 4-diphosphate.</text>
</comment>
<comment type="catalytic activity">
    <reaction evidence="1">
        <text>(2E)-4-hydroxy-3-methylbut-2-enyl diphosphate + oxidized [flavodoxin] + H2O + 2 H(+) = 2-C-methyl-D-erythritol 2,4-cyclic diphosphate + reduced [flavodoxin]</text>
        <dbReference type="Rhea" id="RHEA:43604"/>
        <dbReference type="Rhea" id="RHEA-COMP:10622"/>
        <dbReference type="Rhea" id="RHEA-COMP:10623"/>
        <dbReference type="ChEBI" id="CHEBI:15377"/>
        <dbReference type="ChEBI" id="CHEBI:15378"/>
        <dbReference type="ChEBI" id="CHEBI:57618"/>
        <dbReference type="ChEBI" id="CHEBI:58210"/>
        <dbReference type="ChEBI" id="CHEBI:58483"/>
        <dbReference type="ChEBI" id="CHEBI:128753"/>
        <dbReference type="EC" id="1.17.7.3"/>
    </reaction>
</comment>
<comment type="cofactor">
    <cofactor evidence="1">
        <name>[4Fe-4S] cluster</name>
        <dbReference type="ChEBI" id="CHEBI:49883"/>
    </cofactor>
    <text evidence="1">Binds 1 [4Fe-4S] cluster.</text>
</comment>
<comment type="pathway">
    <text evidence="1">Isoprenoid biosynthesis; isopentenyl diphosphate biosynthesis via DXP pathway; isopentenyl diphosphate from 1-deoxy-D-xylulose 5-phosphate: step 5/6.</text>
</comment>
<comment type="similarity">
    <text evidence="1">Belongs to the IspG family.</text>
</comment>
<evidence type="ECO:0000255" key="1">
    <source>
        <dbReference type="HAMAP-Rule" id="MF_00159"/>
    </source>
</evidence>
<evidence type="ECO:0000256" key="2">
    <source>
        <dbReference type="SAM" id="MobiDB-lite"/>
    </source>
</evidence>
<protein>
    <recommendedName>
        <fullName evidence="1">4-hydroxy-3-methylbut-2-en-1-yl diphosphate synthase (flavodoxin)</fullName>
        <ecNumber evidence="1">1.17.7.3</ecNumber>
    </recommendedName>
    <alternativeName>
        <fullName evidence="1">1-hydroxy-2-methyl-2-(E)-butenyl 4-diphosphate synthase</fullName>
    </alternativeName>
</protein>
<proteinExistence type="inferred from homology"/>
<dbReference type="EC" id="1.17.7.3" evidence="1"/>
<dbReference type="EMBL" id="AM747720">
    <property type="protein sequence ID" value="CAR52184.1"/>
    <property type="molecule type" value="Genomic_DNA"/>
</dbReference>
<dbReference type="RefSeq" id="WP_006483314.1">
    <property type="nucleotide sequence ID" value="NC_011000.1"/>
</dbReference>
<dbReference type="SMR" id="B4EAW9"/>
<dbReference type="GeneID" id="83048609"/>
<dbReference type="KEGG" id="bcj:BCAL1884"/>
<dbReference type="eggNOG" id="COG0821">
    <property type="taxonomic scope" value="Bacteria"/>
</dbReference>
<dbReference type="HOGENOM" id="CLU_042258_1_0_4"/>
<dbReference type="BioCyc" id="BCEN216591:G1G1V-2076-MONOMER"/>
<dbReference type="UniPathway" id="UPA00056">
    <property type="reaction ID" value="UER00096"/>
</dbReference>
<dbReference type="Proteomes" id="UP000001035">
    <property type="component" value="Chromosome 1"/>
</dbReference>
<dbReference type="GO" id="GO:0051539">
    <property type="term" value="F:4 iron, 4 sulfur cluster binding"/>
    <property type="evidence" value="ECO:0007669"/>
    <property type="project" value="UniProtKB-UniRule"/>
</dbReference>
<dbReference type="GO" id="GO:0046429">
    <property type="term" value="F:4-hydroxy-3-methylbut-2-en-1-yl diphosphate synthase activity (ferredoxin)"/>
    <property type="evidence" value="ECO:0007669"/>
    <property type="project" value="UniProtKB-UniRule"/>
</dbReference>
<dbReference type="GO" id="GO:0141197">
    <property type="term" value="F:4-hydroxy-3-methylbut-2-enyl-diphosphate synthase activity (flavodoxin)"/>
    <property type="evidence" value="ECO:0007669"/>
    <property type="project" value="UniProtKB-EC"/>
</dbReference>
<dbReference type="GO" id="GO:0005506">
    <property type="term" value="F:iron ion binding"/>
    <property type="evidence" value="ECO:0007669"/>
    <property type="project" value="InterPro"/>
</dbReference>
<dbReference type="GO" id="GO:0019288">
    <property type="term" value="P:isopentenyl diphosphate biosynthetic process, methylerythritol 4-phosphate pathway"/>
    <property type="evidence" value="ECO:0007669"/>
    <property type="project" value="UniProtKB-UniRule"/>
</dbReference>
<dbReference type="GO" id="GO:0016114">
    <property type="term" value="P:terpenoid biosynthetic process"/>
    <property type="evidence" value="ECO:0007669"/>
    <property type="project" value="InterPro"/>
</dbReference>
<dbReference type="FunFam" id="3.30.413.10:FF:000012">
    <property type="entry name" value="4-hydroxy-3-methylbut-2-en-1-yl diphosphate synthase (flavodoxin)"/>
    <property type="match status" value="1"/>
</dbReference>
<dbReference type="Gene3D" id="3.20.20.20">
    <property type="entry name" value="Dihydropteroate synthase-like"/>
    <property type="match status" value="1"/>
</dbReference>
<dbReference type="Gene3D" id="3.30.413.10">
    <property type="entry name" value="Sulfite Reductase Hemoprotein, domain 1"/>
    <property type="match status" value="1"/>
</dbReference>
<dbReference type="HAMAP" id="MF_00159">
    <property type="entry name" value="IspG"/>
    <property type="match status" value="1"/>
</dbReference>
<dbReference type="InterPro" id="IPR011005">
    <property type="entry name" value="Dihydropteroate_synth-like_sf"/>
</dbReference>
<dbReference type="InterPro" id="IPR016425">
    <property type="entry name" value="IspG_bac"/>
</dbReference>
<dbReference type="InterPro" id="IPR004588">
    <property type="entry name" value="IspG_bac-typ"/>
</dbReference>
<dbReference type="InterPro" id="IPR045854">
    <property type="entry name" value="NO2/SO3_Rdtase_4Fe4S_sf"/>
</dbReference>
<dbReference type="NCBIfam" id="TIGR00612">
    <property type="entry name" value="ispG_gcpE"/>
    <property type="match status" value="1"/>
</dbReference>
<dbReference type="NCBIfam" id="NF001540">
    <property type="entry name" value="PRK00366.1"/>
    <property type="match status" value="1"/>
</dbReference>
<dbReference type="PANTHER" id="PTHR30454">
    <property type="entry name" value="4-HYDROXY-3-METHYLBUT-2-EN-1-YL DIPHOSPHATE SYNTHASE"/>
    <property type="match status" value="1"/>
</dbReference>
<dbReference type="PANTHER" id="PTHR30454:SF0">
    <property type="entry name" value="4-HYDROXY-3-METHYLBUT-2-EN-1-YL DIPHOSPHATE SYNTHASE (FERREDOXIN), CHLOROPLASTIC"/>
    <property type="match status" value="1"/>
</dbReference>
<dbReference type="Pfam" id="PF04551">
    <property type="entry name" value="GcpE"/>
    <property type="match status" value="1"/>
</dbReference>
<dbReference type="PIRSF" id="PIRSF004640">
    <property type="entry name" value="IspG"/>
    <property type="match status" value="1"/>
</dbReference>
<name>ISPG_BURCJ</name>
<sequence>MQSEAQSPRSSQICSTEPVFGGHQPRRVSHAVDVRWGGQLVTIGGDAPVRVQSMTNTDTADAIGTAIQIKELANAGSELVRITVNTPEAAAAVPAIREQLDRMGVTVPLVGDFHYNGHLLLRDYPGCAESLSKYRINPGNVGQGAKRDTQFAQMIEAAAKYDKPVRIGVNWGSLDQDLLARMMDENGARAQPWDAQSVMYEALIQSAIGSAERAVELGLGRDRIVLSCKVSGVQDLIAVYRELGRRCGFALHLGLTEAGMGSKGIVASTAALGVLLQEGIGDTIRISLTPEPGASRTGEVIVGQEILQTMGLRSFAPMVIACPGCGRTTSTLFQELAMQIQTYLREQMPVWRKEYPGVEKMNVAVMGCIVNGPGESKHANIGISLPGSGENPAAPVFIDGEKVKTLRGERIAEEFQQIVSDYVARNYGRTEALN</sequence>
<gene>
    <name evidence="1" type="primary">ispG</name>
    <name type="ordered locus">BceJ2315_18470</name>
    <name type="ORF">BCAL1884</name>
</gene>
<keyword id="KW-0004">4Fe-4S</keyword>
<keyword id="KW-0408">Iron</keyword>
<keyword id="KW-0411">Iron-sulfur</keyword>
<keyword id="KW-0414">Isoprene biosynthesis</keyword>
<keyword id="KW-0479">Metal-binding</keyword>
<keyword id="KW-0560">Oxidoreductase</keyword>
<accession>B4EAW9</accession>
<feature type="chain" id="PRO_1000097152" description="4-hydroxy-3-methylbut-2-en-1-yl diphosphate synthase (flavodoxin)">
    <location>
        <begin position="1"/>
        <end position="434"/>
    </location>
</feature>
<feature type="region of interest" description="Disordered" evidence="2">
    <location>
        <begin position="1"/>
        <end position="24"/>
    </location>
</feature>
<feature type="compositionally biased region" description="Polar residues" evidence="2">
    <location>
        <begin position="1"/>
        <end position="15"/>
    </location>
</feature>
<feature type="binding site" evidence="1">
    <location>
        <position position="322"/>
    </location>
    <ligand>
        <name>[4Fe-4S] cluster</name>
        <dbReference type="ChEBI" id="CHEBI:49883"/>
    </ligand>
</feature>
<feature type="binding site" evidence="1">
    <location>
        <position position="325"/>
    </location>
    <ligand>
        <name>[4Fe-4S] cluster</name>
        <dbReference type="ChEBI" id="CHEBI:49883"/>
    </ligand>
</feature>
<feature type="binding site" evidence="1">
    <location>
        <position position="368"/>
    </location>
    <ligand>
        <name>[4Fe-4S] cluster</name>
        <dbReference type="ChEBI" id="CHEBI:49883"/>
    </ligand>
</feature>
<feature type="binding site" evidence="1">
    <location>
        <position position="375"/>
    </location>
    <ligand>
        <name>[4Fe-4S] cluster</name>
        <dbReference type="ChEBI" id="CHEBI:49883"/>
    </ligand>
</feature>
<reference key="1">
    <citation type="journal article" date="2009" name="J. Bacteriol.">
        <title>The genome of Burkholderia cenocepacia J2315, an epidemic pathogen of cystic fibrosis patients.</title>
        <authorList>
            <person name="Holden M.T."/>
            <person name="Seth-Smith H.M."/>
            <person name="Crossman L.C."/>
            <person name="Sebaihia M."/>
            <person name="Bentley S.D."/>
            <person name="Cerdeno-Tarraga A.M."/>
            <person name="Thomson N.R."/>
            <person name="Bason N."/>
            <person name="Quail M.A."/>
            <person name="Sharp S."/>
            <person name="Cherevach I."/>
            <person name="Churcher C."/>
            <person name="Goodhead I."/>
            <person name="Hauser H."/>
            <person name="Holroyd N."/>
            <person name="Mungall K."/>
            <person name="Scott P."/>
            <person name="Walker D."/>
            <person name="White B."/>
            <person name="Rose H."/>
            <person name="Iversen P."/>
            <person name="Mil-Homens D."/>
            <person name="Rocha E.P."/>
            <person name="Fialho A.M."/>
            <person name="Baldwin A."/>
            <person name="Dowson C."/>
            <person name="Barrell B.G."/>
            <person name="Govan J.R."/>
            <person name="Vandamme P."/>
            <person name="Hart C.A."/>
            <person name="Mahenthiralingam E."/>
            <person name="Parkhill J."/>
        </authorList>
    </citation>
    <scope>NUCLEOTIDE SEQUENCE [LARGE SCALE GENOMIC DNA]</scope>
    <source>
        <strain>ATCC BAA-245 / DSM 16553 / LMG 16656 / NCTC 13227 / J2315 / CF5610</strain>
    </source>
</reference>